<dbReference type="EMBL" id="AY191283">
    <property type="protein sequence ID" value="AAO61965.1"/>
    <property type="molecule type" value="Genomic_DNA"/>
</dbReference>
<dbReference type="SMR" id="Q847S1"/>
<dbReference type="GO" id="GO:0005737">
    <property type="term" value="C:cytoplasm"/>
    <property type="evidence" value="ECO:0007669"/>
    <property type="project" value="UniProtKB-ARBA"/>
</dbReference>
<dbReference type="GO" id="GO:1990904">
    <property type="term" value="C:ribonucleoprotein complex"/>
    <property type="evidence" value="ECO:0007669"/>
    <property type="project" value="UniProtKB-KW"/>
</dbReference>
<dbReference type="GO" id="GO:0005840">
    <property type="term" value="C:ribosome"/>
    <property type="evidence" value="ECO:0007669"/>
    <property type="project" value="UniProtKB-KW"/>
</dbReference>
<dbReference type="GO" id="GO:0008097">
    <property type="term" value="F:5S rRNA binding"/>
    <property type="evidence" value="ECO:0007669"/>
    <property type="project" value="TreeGrafter"/>
</dbReference>
<dbReference type="GO" id="GO:0003735">
    <property type="term" value="F:structural constituent of ribosome"/>
    <property type="evidence" value="ECO:0007669"/>
    <property type="project" value="InterPro"/>
</dbReference>
<dbReference type="GO" id="GO:0006412">
    <property type="term" value="P:translation"/>
    <property type="evidence" value="ECO:0007669"/>
    <property type="project" value="UniProtKB-UniRule"/>
</dbReference>
<dbReference type="CDD" id="cd00432">
    <property type="entry name" value="Ribosomal_L18_L5e"/>
    <property type="match status" value="1"/>
</dbReference>
<dbReference type="Gene3D" id="3.30.420.100">
    <property type="match status" value="1"/>
</dbReference>
<dbReference type="HAMAP" id="MF_01337_B">
    <property type="entry name" value="Ribosomal_uL18_B"/>
    <property type="match status" value="1"/>
</dbReference>
<dbReference type="InterPro" id="IPR004389">
    <property type="entry name" value="Ribosomal_uL18_bac-type"/>
</dbReference>
<dbReference type="InterPro" id="IPR005484">
    <property type="entry name" value="Ribosomal_uL18_bac/euk"/>
</dbReference>
<dbReference type="NCBIfam" id="TIGR00060">
    <property type="entry name" value="L18_bact"/>
    <property type="match status" value="1"/>
</dbReference>
<dbReference type="PANTHER" id="PTHR12899">
    <property type="entry name" value="39S RIBOSOMAL PROTEIN L18, MITOCHONDRIAL"/>
    <property type="match status" value="1"/>
</dbReference>
<dbReference type="PANTHER" id="PTHR12899:SF3">
    <property type="entry name" value="LARGE RIBOSOMAL SUBUNIT PROTEIN UL18M"/>
    <property type="match status" value="1"/>
</dbReference>
<dbReference type="Pfam" id="PF00861">
    <property type="entry name" value="Ribosomal_L18p"/>
    <property type="match status" value="1"/>
</dbReference>
<dbReference type="SUPFAM" id="SSF53137">
    <property type="entry name" value="Translational machinery components"/>
    <property type="match status" value="1"/>
</dbReference>
<keyword id="KW-0687">Ribonucleoprotein</keyword>
<keyword id="KW-0689">Ribosomal protein</keyword>
<keyword id="KW-0694">RNA-binding</keyword>
<keyword id="KW-0699">rRNA-binding</keyword>
<feature type="chain" id="PRO_0000131203" description="Large ribosomal subunit protein uL18">
    <location>
        <begin position="1"/>
        <end position="114"/>
    </location>
</feature>
<proteinExistence type="inferred from homology"/>
<reference key="1">
    <citation type="journal article" date="2003" name="J. Bacteriol.">
        <title>Identification and characterization of phytoplasmal genes, employing a novel method of isolating phytoplasmal genomic DNA.</title>
        <authorList>
            <person name="Melamed S."/>
            <person name="Tanne E."/>
            <person name="Ben-Haim R."/>
            <person name="Edelbaum O."/>
            <person name="Yogev D."/>
            <person name="Sela I."/>
        </authorList>
    </citation>
    <scope>NUCLEOTIDE SEQUENCE [GENOMIC DNA]</scope>
</reference>
<protein>
    <recommendedName>
        <fullName evidence="1">Large ribosomal subunit protein uL18</fullName>
    </recommendedName>
    <alternativeName>
        <fullName evidence="2">50S ribosomal protein L18</fullName>
    </alternativeName>
</protein>
<name>RL18_ASTYP</name>
<evidence type="ECO:0000255" key="1">
    <source>
        <dbReference type="HAMAP-Rule" id="MF_01337"/>
    </source>
</evidence>
<evidence type="ECO:0000305" key="2"/>
<gene>
    <name evidence="1" type="primary">rplR</name>
</gene>
<accession>Q847S1</accession>
<comment type="function">
    <text evidence="1">This is one of the proteins that bind and probably mediate the attachment of the 5S RNA into the large ribosomal subunit, where it forms part of the central protuberance.</text>
</comment>
<comment type="subunit">
    <text evidence="1">Part of the 50S ribosomal subunit; part of the 5S rRNA/L5/L18/L25 subcomplex. Contacts the 5S and 23S rRNAs.</text>
</comment>
<comment type="similarity">
    <text evidence="1">Belongs to the universal ribosomal protein uL18 family.</text>
</comment>
<organism>
    <name type="scientific">Aster yellows phytoplasma</name>
    <dbReference type="NCBI Taxonomy" id="35779"/>
    <lineage>
        <taxon>Bacteria</taxon>
        <taxon>Bacillati</taxon>
        <taxon>Mycoplasmatota</taxon>
        <taxon>Mollicutes</taxon>
        <taxon>Acholeplasmatales</taxon>
        <taxon>Acholeplasmataceae</taxon>
        <taxon>Candidatus Phytoplasma</taxon>
        <taxon>16SrI (Aster yellows group)</taxon>
    </lineage>
</organism>
<sequence>MKKKYTIRKKIFGFLEKPRVSIFRSNKHIYAQVIDDYKGNTLISASSKKLLKFYKKRREKKITKKELSYKIGNLLGKIIKSYGISKILFDRNGYIYHGRVKALAKGLRNVGLQF</sequence>